<protein>
    <recommendedName>
        <fullName evidence="1">Small ribosomal subunit protein uS10</fullName>
    </recommendedName>
    <alternativeName>
        <fullName evidence="2">30S ribosomal protein S10</fullName>
    </alternativeName>
</protein>
<accession>P67904</accession>
<accession>O68928</accession>
<accession>P44378</accession>
<accession>Q9CL31</accession>
<proteinExistence type="inferred from homology"/>
<reference key="1">
    <citation type="journal article" date="2001" name="Nature">
        <title>Complete genome sequence of Salmonella enterica serovar Typhimurium LT2.</title>
        <authorList>
            <person name="McClelland M."/>
            <person name="Sanderson K.E."/>
            <person name="Spieth J."/>
            <person name="Clifton S.W."/>
            <person name="Latreille P."/>
            <person name="Courtney L."/>
            <person name="Porwollik S."/>
            <person name="Ali J."/>
            <person name="Dante M."/>
            <person name="Du F."/>
            <person name="Hou S."/>
            <person name="Layman D."/>
            <person name="Leonard S."/>
            <person name="Nguyen C."/>
            <person name="Scott K."/>
            <person name="Holmes A."/>
            <person name="Grewal N."/>
            <person name="Mulvaney E."/>
            <person name="Ryan E."/>
            <person name="Sun H."/>
            <person name="Florea L."/>
            <person name="Miller W."/>
            <person name="Stoneking T."/>
            <person name="Nhan M."/>
            <person name="Waterston R."/>
            <person name="Wilson R.K."/>
        </authorList>
    </citation>
    <scope>NUCLEOTIDE SEQUENCE [LARGE SCALE GENOMIC DNA]</scope>
    <source>
        <strain>LT2 / SGSC1412 / ATCC 700720</strain>
    </source>
</reference>
<reference key="2">
    <citation type="submission" date="1998-04" db="EMBL/GenBank/DDBJ databases">
        <authorList>
            <person name="Noorani S.M."/>
            <person name="Lindahl L."/>
            <person name="Zengel J.M."/>
        </authorList>
    </citation>
    <scope>NUCLEOTIDE SEQUENCE [GENOMIC DNA] OF 1-8</scope>
    <source>
        <strain>LT2</strain>
    </source>
</reference>
<evidence type="ECO:0000255" key="1">
    <source>
        <dbReference type="HAMAP-Rule" id="MF_00508"/>
    </source>
</evidence>
<evidence type="ECO:0000305" key="2"/>
<keyword id="KW-1185">Reference proteome</keyword>
<keyword id="KW-0687">Ribonucleoprotein</keyword>
<keyword id="KW-0689">Ribosomal protein</keyword>
<comment type="function">
    <text evidence="1">Involved in the binding of tRNA to the ribosomes.</text>
</comment>
<comment type="subunit">
    <text evidence="1">Part of the 30S ribosomal subunit.</text>
</comment>
<comment type="similarity">
    <text evidence="1">Belongs to the universal ribosomal protein uS10 family.</text>
</comment>
<gene>
    <name evidence="1" type="primary">rpsJ</name>
    <name type="ordered locus">STM3441</name>
</gene>
<feature type="chain" id="PRO_0000146589" description="Small ribosomal subunit protein uS10">
    <location>
        <begin position="1"/>
        <end position="103"/>
    </location>
</feature>
<name>RS10_SALTY</name>
<sequence>MQNQRIRIRLKAFDHRLIDQSTAEIVETAKRTGAQVRGPIPLPTRKERFTVLISPHVNKDARDQYEIRTHKRLVDIVEPTEKTVDALMRLDLAAGVDVQISLG</sequence>
<organism>
    <name type="scientific">Salmonella typhimurium (strain LT2 / SGSC1412 / ATCC 700720)</name>
    <dbReference type="NCBI Taxonomy" id="99287"/>
    <lineage>
        <taxon>Bacteria</taxon>
        <taxon>Pseudomonadati</taxon>
        <taxon>Pseudomonadota</taxon>
        <taxon>Gammaproteobacteria</taxon>
        <taxon>Enterobacterales</taxon>
        <taxon>Enterobacteriaceae</taxon>
        <taxon>Salmonella</taxon>
    </lineage>
</organism>
<dbReference type="EMBL" id="AE006468">
    <property type="protein sequence ID" value="AAL22304.1"/>
    <property type="molecule type" value="Genomic_DNA"/>
</dbReference>
<dbReference type="EMBL" id="AF058449">
    <property type="protein sequence ID" value="AAC14285.1"/>
    <property type="molecule type" value="Genomic_DNA"/>
</dbReference>
<dbReference type="RefSeq" id="NP_462345.1">
    <property type="nucleotide sequence ID" value="NC_003197.2"/>
</dbReference>
<dbReference type="RefSeq" id="WP_001181005.1">
    <property type="nucleotide sequence ID" value="NC_003197.2"/>
</dbReference>
<dbReference type="SMR" id="P67904"/>
<dbReference type="STRING" id="99287.STM3441"/>
<dbReference type="PaxDb" id="99287-STM3441"/>
<dbReference type="GeneID" id="1254964"/>
<dbReference type="GeneID" id="98390443"/>
<dbReference type="KEGG" id="stm:STM3441"/>
<dbReference type="PATRIC" id="fig|99287.12.peg.3638"/>
<dbReference type="HOGENOM" id="CLU_122625_1_3_6"/>
<dbReference type="OMA" id="VDIEIKM"/>
<dbReference type="PhylomeDB" id="P67904"/>
<dbReference type="BioCyc" id="SENT99287:STM3441-MONOMER"/>
<dbReference type="PRO" id="PR:P67904"/>
<dbReference type="Proteomes" id="UP000001014">
    <property type="component" value="Chromosome"/>
</dbReference>
<dbReference type="GO" id="GO:0015935">
    <property type="term" value="C:small ribosomal subunit"/>
    <property type="evidence" value="ECO:0000318"/>
    <property type="project" value="GO_Central"/>
</dbReference>
<dbReference type="GO" id="GO:0003735">
    <property type="term" value="F:structural constituent of ribosome"/>
    <property type="evidence" value="ECO:0000318"/>
    <property type="project" value="GO_Central"/>
</dbReference>
<dbReference type="GO" id="GO:0000049">
    <property type="term" value="F:tRNA binding"/>
    <property type="evidence" value="ECO:0007669"/>
    <property type="project" value="UniProtKB-UniRule"/>
</dbReference>
<dbReference type="GO" id="GO:0006412">
    <property type="term" value="P:translation"/>
    <property type="evidence" value="ECO:0007669"/>
    <property type="project" value="UniProtKB-UniRule"/>
</dbReference>
<dbReference type="FunFam" id="3.30.70.600:FF:000001">
    <property type="entry name" value="30S ribosomal protein S10"/>
    <property type="match status" value="1"/>
</dbReference>
<dbReference type="Gene3D" id="3.30.70.600">
    <property type="entry name" value="Ribosomal protein S10 domain"/>
    <property type="match status" value="1"/>
</dbReference>
<dbReference type="HAMAP" id="MF_00508">
    <property type="entry name" value="Ribosomal_uS10"/>
    <property type="match status" value="1"/>
</dbReference>
<dbReference type="InterPro" id="IPR001848">
    <property type="entry name" value="Ribosomal_uS10"/>
</dbReference>
<dbReference type="InterPro" id="IPR018268">
    <property type="entry name" value="Ribosomal_uS10_CS"/>
</dbReference>
<dbReference type="InterPro" id="IPR027486">
    <property type="entry name" value="Ribosomal_uS10_dom"/>
</dbReference>
<dbReference type="InterPro" id="IPR036838">
    <property type="entry name" value="Ribosomal_uS10_dom_sf"/>
</dbReference>
<dbReference type="NCBIfam" id="NF001861">
    <property type="entry name" value="PRK00596.1"/>
    <property type="match status" value="1"/>
</dbReference>
<dbReference type="NCBIfam" id="TIGR01049">
    <property type="entry name" value="rpsJ_bact"/>
    <property type="match status" value="1"/>
</dbReference>
<dbReference type="PANTHER" id="PTHR11700">
    <property type="entry name" value="30S RIBOSOMAL PROTEIN S10 FAMILY MEMBER"/>
    <property type="match status" value="1"/>
</dbReference>
<dbReference type="Pfam" id="PF00338">
    <property type="entry name" value="Ribosomal_S10"/>
    <property type="match status" value="1"/>
</dbReference>
<dbReference type="PRINTS" id="PR00971">
    <property type="entry name" value="RIBOSOMALS10"/>
</dbReference>
<dbReference type="SMART" id="SM01403">
    <property type="entry name" value="Ribosomal_S10"/>
    <property type="match status" value="1"/>
</dbReference>
<dbReference type="SUPFAM" id="SSF54999">
    <property type="entry name" value="Ribosomal protein S10"/>
    <property type="match status" value="1"/>
</dbReference>
<dbReference type="PROSITE" id="PS00361">
    <property type="entry name" value="RIBOSOMAL_S10"/>
    <property type="match status" value="1"/>
</dbReference>